<accession>B1VHK2</accession>
<feature type="chain" id="PRO_1000191966" description="Aspartate 1-decarboxylase beta chain" evidence="1">
    <location>
        <begin position="1"/>
        <end position="24"/>
    </location>
</feature>
<feature type="chain" id="PRO_1000191967" description="Aspartate 1-decarboxylase alpha chain" evidence="1">
    <location>
        <begin position="25"/>
        <end position="139"/>
    </location>
</feature>
<feature type="region of interest" description="Disordered" evidence="2">
    <location>
        <begin position="116"/>
        <end position="139"/>
    </location>
</feature>
<feature type="active site" description="Schiff-base intermediate with substrate; via pyruvic acid" evidence="1">
    <location>
        <position position="25"/>
    </location>
</feature>
<feature type="active site" description="Proton donor" evidence="1">
    <location>
        <position position="58"/>
    </location>
</feature>
<feature type="binding site" evidence="1">
    <location>
        <position position="57"/>
    </location>
    <ligand>
        <name>substrate</name>
    </ligand>
</feature>
<feature type="binding site" evidence="1">
    <location>
        <begin position="73"/>
        <end position="75"/>
    </location>
    <ligand>
        <name>substrate</name>
    </ligand>
</feature>
<feature type="modified residue" description="Pyruvic acid (Ser)" evidence="1">
    <location>
        <position position="25"/>
    </location>
</feature>
<comment type="function">
    <text evidence="1">Catalyzes the pyruvoyl-dependent decarboxylation of aspartate to produce beta-alanine.</text>
</comment>
<comment type="catalytic activity">
    <reaction evidence="1">
        <text>L-aspartate + H(+) = beta-alanine + CO2</text>
        <dbReference type="Rhea" id="RHEA:19497"/>
        <dbReference type="ChEBI" id="CHEBI:15378"/>
        <dbReference type="ChEBI" id="CHEBI:16526"/>
        <dbReference type="ChEBI" id="CHEBI:29991"/>
        <dbReference type="ChEBI" id="CHEBI:57966"/>
        <dbReference type="EC" id="4.1.1.11"/>
    </reaction>
</comment>
<comment type="cofactor">
    <cofactor evidence="1">
        <name>pyruvate</name>
        <dbReference type="ChEBI" id="CHEBI:15361"/>
    </cofactor>
    <text evidence="1">Binds 1 pyruvoyl group covalently per subunit.</text>
</comment>
<comment type="pathway">
    <text evidence="1">Cofactor biosynthesis; (R)-pantothenate biosynthesis; beta-alanine from L-aspartate: step 1/1.</text>
</comment>
<comment type="subunit">
    <text evidence="1">Heterooctamer of four alpha and four beta subunits.</text>
</comment>
<comment type="subcellular location">
    <subcellularLocation>
        <location evidence="1">Cytoplasm</location>
    </subcellularLocation>
</comment>
<comment type="PTM">
    <text evidence="1">Is synthesized initially as an inactive proenzyme, which is activated by self-cleavage at a specific serine bond to produce a beta-subunit with a hydroxyl group at its C-terminus and an alpha-subunit with a pyruvoyl group at its N-terminus.</text>
</comment>
<comment type="similarity">
    <text evidence="1">Belongs to the PanD family.</text>
</comment>
<dbReference type="EC" id="4.1.1.11" evidence="1"/>
<dbReference type="EMBL" id="AM942444">
    <property type="protein sequence ID" value="CAQ05652.1"/>
    <property type="molecule type" value="Genomic_DNA"/>
</dbReference>
<dbReference type="RefSeq" id="WP_012360928.1">
    <property type="nucleotide sequence ID" value="NC_010545.1"/>
</dbReference>
<dbReference type="SMR" id="B1VHK2"/>
<dbReference type="STRING" id="504474.cu1692"/>
<dbReference type="GeneID" id="60604476"/>
<dbReference type="KEGG" id="cur:cu1692"/>
<dbReference type="eggNOG" id="COG0853">
    <property type="taxonomic scope" value="Bacteria"/>
</dbReference>
<dbReference type="HOGENOM" id="CLU_115305_2_0_11"/>
<dbReference type="UniPathway" id="UPA00028">
    <property type="reaction ID" value="UER00002"/>
</dbReference>
<dbReference type="Proteomes" id="UP000001727">
    <property type="component" value="Chromosome"/>
</dbReference>
<dbReference type="GO" id="GO:0005829">
    <property type="term" value="C:cytosol"/>
    <property type="evidence" value="ECO:0007669"/>
    <property type="project" value="TreeGrafter"/>
</dbReference>
<dbReference type="GO" id="GO:0004068">
    <property type="term" value="F:aspartate 1-decarboxylase activity"/>
    <property type="evidence" value="ECO:0007669"/>
    <property type="project" value="UniProtKB-UniRule"/>
</dbReference>
<dbReference type="GO" id="GO:0006523">
    <property type="term" value="P:alanine biosynthetic process"/>
    <property type="evidence" value="ECO:0007669"/>
    <property type="project" value="InterPro"/>
</dbReference>
<dbReference type="GO" id="GO:0015940">
    <property type="term" value="P:pantothenate biosynthetic process"/>
    <property type="evidence" value="ECO:0007669"/>
    <property type="project" value="UniProtKB-UniRule"/>
</dbReference>
<dbReference type="CDD" id="cd06919">
    <property type="entry name" value="Asp_decarbox"/>
    <property type="match status" value="1"/>
</dbReference>
<dbReference type="Gene3D" id="2.40.40.20">
    <property type="match status" value="1"/>
</dbReference>
<dbReference type="HAMAP" id="MF_00446">
    <property type="entry name" value="PanD"/>
    <property type="match status" value="1"/>
</dbReference>
<dbReference type="InterPro" id="IPR009010">
    <property type="entry name" value="Asp_de-COase-like_dom_sf"/>
</dbReference>
<dbReference type="InterPro" id="IPR003190">
    <property type="entry name" value="Asp_decarbox"/>
</dbReference>
<dbReference type="NCBIfam" id="TIGR00223">
    <property type="entry name" value="panD"/>
    <property type="match status" value="1"/>
</dbReference>
<dbReference type="PANTHER" id="PTHR21012">
    <property type="entry name" value="ASPARTATE 1-DECARBOXYLASE"/>
    <property type="match status" value="1"/>
</dbReference>
<dbReference type="PANTHER" id="PTHR21012:SF0">
    <property type="entry name" value="ASPARTATE 1-DECARBOXYLASE"/>
    <property type="match status" value="1"/>
</dbReference>
<dbReference type="Pfam" id="PF02261">
    <property type="entry name" value="Asp_decarbox"/>
    <property type="match status" value="1"/>
</dbReference>
<dbReference type="PIRSF" id="PIRSF006246">
    <property type="entry name" value="Asp_decarbox"/>
    <property type="match status" value="1"/>
</dbReference>
<dbReference type="SUPFAM" id="SSF50692">
    <property type="entry name" value="ADC-like"/>
    <property type="match status" value="1"/>
</dbReference>
<organism>
    <name type="scientific">Corynebacterium urealyticum (strain ATCC 43042 / DSM 7109)</name>
    <dbReference type="NCBI Taxonomy" id="504474"/>
    <lineage>
        <taxon>Bacteria</taxon>
        <taxon>Bacillati</taxon>
        <taxon>Actinomycetota</taxon>
        <taxon>Actinomycetes</taxon>
        <taxon>Mycobacteriales</taxon>
        <taxon>Corynebacteriaceae</taxon>
        <taxon>Corynebacterium</taxon>
    </lineage>
</organism>
<name>PAND_CORU7</name>
<sequence>MFRTMLKSKIHRATVTQADLHYVGSCTIDADLMDAADILEGEQIDIVDIDNGNRLTTYAITGERGSGVIGINGAAARLISPGDLVIIIGYGIFDNAELGDYHPRVIFVDENNKQVELGEDPAHAPAGSGLKDPRHPEGE</sequence>
<reference key="1">
    <citation type="journal article" date="2008" name="J. Biotechnol.">
        <title>The lifestyle of Corynebacterium urealyticum derived from its complete genome sequence established by pyrosequencing.</title>
        <authorList>
            <person name="Tauch A."/>
            <person name="Trost E."/>
            <person name="Tilker A."/>
            <person name="Ludewig U."/>
            <person name="Schneiker S."/>
            <person name="Goesmann A."/>
            <person name="Arnold W."/>
            <person name="Bekel T."/>
            <person name="Brinkrolf K."/>
            <person name="Brune I."/>
            <person name="Goetker S."/>
            <person name="Kalinowski J."/>
            <person name="Kamp P.-B."/>
            <person name="Lobo F.P."/>
            <person name="Viehoever P."/>
            <person name="Weisshaar B."/>
            <person name="Soriano F."/>
            <person name="Droege M."/>
            <person name="Puehler A."/>
        </authorList>
    </citation>
    <scope>NUCLEOTIDE SEQUENCE [LARGE SCALE GENOMIC DNA]</scope>
    <source>
        <strain>ATCC 43042 / DSM 7109</strain>
    </source>
</reference>
<protein>
    <recommendedName>
        <fullName evidence="1">Aspartate 1-decarboxylase</fullName>
        <ecNumber evidence="1">4.1.1.11</ecNumber>
    </recommendedName>
    <alternativeName>
        <fullName evidence="1">Aspartate alpha-decarboxylase</fullName>
    </alternativeName>
    <component>
        <recommendedName>
            <fullName evidence="1">Aspartate 1-decarboxylase beta chain</fullName>
        </recommendedName>
    </component>
    <component>
        <recommendedName>
            <fullName evidence="1">Aspartate 1-decarboxylase alpha chain</fullName>
        </recommendedName>
    </component>
</protein>
<gene>
    <name evidence="1" type="primary">panD</name>
    <name type="ordered locus">cu1692</name>
</gene>
<keyword id="KW-0068">Autocatalytic cleavage</keyword>
<keyword id="KW-0963">Cytoplasm</keyword>
<keyword id="KW-0210">Decarboxylase</keyword>
<keyword id="KW-0456">Lyase</keyword>
<keyword id="KW-0566">Pantothenate biosynthesis</keyword>
<keyword id="KW-0670">Pyruvate</keyword>
<keyword id="KW-1185">Reference proteome</keyword>
<keyword id="KW-0704">Schiff base</keyword>
<keyword id="KW-0865">Zymogen</keyword>
<proteinExistence type="inferred from homology"/>
<evidence type="ECO:0000255" key="1">
    <source>
        <dbReference type="HAMAP-Rule" id="MF_00446"/>
    </source>
</evidence>
<evidence type="ECO:0000256" key="2">
    <source>
        <dbReference type="SAM" id="MobiDB-lite"/>
    </source>
</evidence>